<organism>
    <name type="scientific">Francisella philomiragia subsp. philomiragia (strain ATCC 25017 / CCUG 19701 / FSC 153 / O#319-036)</name>
    <dbReference type="NCBI Taxonomy" id="484022"/>
    <lineage>
        <taxon>Bacteria</taxon>
        <taxon>Pseudomonadati</taxon>
        <taxon>Pseudomonadota</taxon>
        <taxon>Gammaproteobacteria</taxon>
        <taxon>Thiotrichales</taxon>
        <taxon>Francisellaceae</taxon>
        <taxon>Francisella</taxon>
    </lineage>
</organism>
<feature type="chain" id="PRO_1000081772" description="Small ribosomal subunit protein uS19">
    <location>
        <begin position="1"/>
        <end position="92"/>
    </location>
</feature>
<protein>
    <recommendedName>
        <fullName evidence="1">Small ribosomal subunit protein uS19</fullName>
    </recommendedName>
    <alternativeName>
        <fullName evidence="2">30S ribosomal protein S19</fullName>
    </alternativeName>
</protein>
<comment type="function">
    <text evidence="1">Protein S19 forms a complex with S13 that binds strongly to the 16S ribosomal RNA.</text>
</comment>
<comment type="similarity">
    <text evidence="1">Belongs to the universal ribosomal protein uS19 family.</text>
</comment>
<name>RS19_FRAP2</name>
<proteinExistence type="inferred from homology"/>
<dbReference type="EMBL" id="CP000937">
    <property type="protein sequence ID" value="ABZ86801.1"/>
    <property type="molecule type" value="Genomic_DNA"/>
</dbReference>
<dbReference type="SMR" id="B0U0Y5"/>
<dbReference type="KEGG" id="fph:Fphi_0582"/>
<dbReference type="eggNOG" id="COG0185">
    <property type="taxonomic scope" value="Bacteria"/>
</dbReference>
<dbReference type="HOGENOM" id="CLU_144911_0_1_6"/>
<dbReference type="GO" id="GO:0005737">
    <property type="term" value="C:cytoplasm"/>
    <property type="evidence" value="ECO:0007669"/>
    <property type="project" value="UniProtKB-ARBA"/>
</dbReference>
<dbReference type="GO" id="GO:0015935">
    <property type="term" value="C:small ribosomal subunit"/>
    <property type="evidence" value="ECO:0007669"/>
    <property type="project" value="InterPro"/>
</dbReference>
<dbReference type="GO" id="GO:0019843">
    <property type="term" value="F:rRNA binding"/>
    <property type="evidence" value="ECO:0007669"/>
    <property type="project" value="UniProtKB-UniRule"/>
</dbReference>
<dbReference type="GO" id="GO:0003735">
    <property type="term" value="F:structural constituent of ribosome"/>
    <property type="evidence" value="ECO:0007669"/>
    <property type="project" value="InterPro"/>
</dbReference>
<dbReference type="GO" id="GO:0000028">
    <property type="term" value="P:ribosomal small subunit assembly"/>
    <property type="evidence" value="ECO:0007669"/>
    <property type="project" value="TreeGrafter"/>
</dbReference>
<dbReference type="GO" id="GO:0006412">
    <property type="term" value="P:translation"/>
    <property type="evidence" value="ECO:0007669"/>
    <property type="project" value="UniProtKB-UniRule"/>
</dbReference>
<dbReference type="FunFam" id="3.30.860.10:FF:000001">
    <property type="entry name" value="30S ribosomal protein S19"/>
    <property type="match status" value="1"/>
</dbReference>
<dbReference type="Gene3D" id="3.30.860.10">
    <property type="entry name" value="30s Ribosomal Protein S19, Chain A"/>
    <property type="match status" value="1"/>
</dbReference>
<dbReference type="HAMAP" id="MF_00531">
    <property type="entry name" value="Ribosomal_uS19"/>
    <property type="match status" value="1"/>
</dbReference>
<dbReference type="InterPro" id="IPR002222">
    <property type="entry name" value="Ribosomal_uS19"/>
</dbReference>
<dbReference type="InterPro" id="IPR005732">
    <property type="entry name" value="Ribosomal_uS19_bac-type"/>
</dbReference>
<dbReference type="InterPro" id="IPR020934">
    <property type="entry name" value="Ribosomal_uS19_CS"/>
</dbReference>
<dbReference type="InterPro" id="IPR023575">
    <property type="entry name" value="Ribosomal_uS19_SF"/>
</dbReference>
<dbReference type="NCBIfam" id="TIGR01050">
    <property type="entry name" value="rpsS_bact"/>
    <property type="match status" value="1"/>
</dbReference>
<dbReference type="PANTHER" id="PTHR11880">
    <property type="entry name" value="RIBOSOMAL PROTEIN S19P FAMILY MEMBER"/>
    <property type="match status" value="1"/>
</dbReference>
<dbReference type="PANTHER" id="PTHR11880:SF8">
    <property type="entry name" value="SMALL RIBOSOMAL SUBUNIT PROTEIN US19M"/>
    <property type="match status" value="1"/>
</dbReference>
<dbReference type="Pfam" id="PF00203">
    <property type="entry name" value="Ribosomal_S19"/>
    <property type="match status" value="1"/>
</dbReference>
<dbReference type="PIRSF" id="PIRSF002144">
    <property type="entry name" value="Ribosomal_S19"/>
    <property type="match status" value="1"/>
</dbReference>
<dbReference type="PRINTS" id="PR00975">
    <property type="entry name" value="RIBOSOMALS19"/>
</dbReference>
<dbReference type="SUPFAM" id="SSF54570">
    <property type="entry name" value="Ribosomal protein S19"/>
    <property type="match status" value="1"/>
</dbReference>
<dbReference type="PROSITE" id="PS00323">
    <property type="entry name" value="RIBOSOMAL_S19"/>
    <property type="match status" value="1"/>
</dbReference>
<sequence length="92" mass="10453">MPRSLKKGPFVDHHLLKKVFEAQESNSKKPIKTWSRRSLIVPDMIGLTIAVHNGQQHVPVLMTEEMVGHKLGEFAVTRNYRGHAADKKAKKK</sequence>
<keyword id="KW-0687">Ribonucleoprotein</keyword>
<keyword id="KW-0689">Ribosomal protein</keyword>
<keyword id="KW-0694">RNA-binding</keyword>
<keyword id="KW-0699">rRNA-binding</keyword>
<reference key="1">
    <citation type="submission" date="2007-12" db="EMBL/GenBank/DDBJ databases">
        <title>Complete sequence of chromosome of Francisella philomiragia subsp. philomiragia ATCC 25017.</title>
        <authorList>
            <consortium name="US DOE Joint Genome Institute"/>
            <person name="Copeland A."/>
            <person name="Lucas S."/>
            <person name="Lapidus A."/>
            <person name="Barry K."/>
            <person name="Detter J.C."/>
            <person name="Glavina del Rio T."/>
            <person name="Hammon N."/>
            <person name="Israni S."/>
            <person name="Dalin E."/>
            <person name="Tice H."/>
            <person name="Pitluck S."/>
            <person name="Chain P."/>
            <person name="Malfatti S."/>
            <person name="Shin M."/>
            <person name="Vergez L."/>
            <person name="Schmutz J."/>
            <person name="Larimer F."/>
            <person name="Land M."/>
            <person name="Hauser L."/>
            <person name="Richardson P."/>
        </authorList>
    </citation>
    <scope>NUCLEOTIDE SEQUENCE [LARGE SCALE GENOMIC DNA]</scope>
    <source>
        <strain>ATCC 25017 / CCUG 19701 / FSC 153 / O#319-036</strain>
    </source>
</reference>
<gene>
    <name evidence="1" type="primary">rpsS</name>
    <name type="ordered locus">Fphi_0582</name>
</gene>
<evidence type="ECO:0000255" key="1">
    <source>
        <dbReference type="HAMAP-Rule" id="MF_00531"/>
    </source>
</evidence>
<evidence type="ECO:0000305" key="2"/>
<accession>B0U0Y5</accession>